<accession>Q21MG7</accession>
<dbReference type="EC" id="6.3.2.4" evidence="2"/>
<dbReference type="EMBL" id="CP000282">
    <property type="protein sequence ID" value="ABD80112.1"/>
    <property type="molecule type" value="Genomic_DNA"/>
</dbReference>
<dbReference type="RefSeq" id="WP_011467333.1">
    <property type="nucleotide sequence ID" value="NC_007912.1"/>
</dbReference>
<dbReference type="SMR" id="Q21MG7"/>
<dbReference type="STRING" id="203122.Sde_0850"/>
<dbReference type="GeneID" id="98612532"/>
<dbReference type="KEGG" id="sde:Sde_0850"/>
<dbReference type="eggNOG" id="COG1181">
    <property type="taxonomic scope" value="Bacteria"/>
</dbReference>
<dbReference type="HOGENOM" id="CLU_039268_1_2_6"/>
<dbReference type="OrthoDB" id="9813261at2"/>
<dbReference type="UniPathway" id="UPA00219"/>
<dbReference type="Proteomes" id="UP000001947">
    <property type="component" value="Chromosome"/>
</dbReference>
<dbReference type="GO" id="GO:0005829">
    <property type="term" value="C:cytosol"/>
    <property type="evidence" value="ECO:0007669"/>
    <property type="project" value="TreeGrafter"/>
</dbReference>
<dbReference type="GO" id="GO:0005524">
    <property type="term" value="F:ATP binding"/>
    <property type="evidence" value="ECO:0007669"/>
    <property type="project" value="UniProtKB-KW"/>
</dbReference>
<dbReference type="GO" id="GO:0008716">
    <property type="term" value="F:D-alanine-D-alanine ligase activity"/>
    <property type="evidence" value="ECO:0007669"/>
    <property type="project" value="UniProtKB-UniRule"/>
</dbReference>
<dbReference type="GO" id="GO:0046872">
    <property type="term" value="F:metal ion binding"/>
    <property type="evidence" value="ECO:0007669"/>
    <property type="project" value="UniProtKB-KW"/>
</dbReference>
<dbReference type="GO" id="GO:0071555">
    <property type="term" value="P:cell wall organization"/>
    <property type="evidence" value="ECO:0007669"/>
    <property type="project" value="UniProtKB-KW"/>
</dbReference>
<dbReference type="GO" id="GO:0009252">
    <property type="term" value="P:peptidoglycan biosynthetic process"/>
    <property type="evidence" value="ECO:0007669"/>
    <property type="project" value="UniProtKB-UniRule"/>
</dbReference>
<dbReference type="GO" id="GO:0008360">
    <property type="term" value="P:regulation of cell shape"/>
    <property type="evidence" value="ECO:0007669"/>
    <property type="project" value="UniProtKB-KW"/>
</dbReference>
<dbReference type="FunFam" id="3.30.470.20:FF:000008">
    <property type="entry name" value="D-alanine--D-alanine ligase"/>
    <property type="match status" value="1"/>
</dbReference>
<dbReference type="Gene3D" id="3.40.50.20">
    <property type="match status" value="1"/>
</dbReference>
<dbReference type="Gene3D" id="3.30.1490.20">
    <property type="entry name" value="ATP-grasp fold, A domain"/>
    <property type="match status" value="1"/>
</dbReference>
<dbReference type="Gene3D" id="3.30.470.20">
    <property type="entry name" value="ATP-grasp fold, B domain"/>
    <property type="match status" value="1"/>
</dbReference>
<dbReference type="HAMAP" id="MF_00047">
    <property type="entry name" value="Dala_Dala_lig"/>
    <property type="match status" value="1"/>
</dbReference>
<dbReference type="InterPro" id="IPR011761">
    <property type="entry name" value="ATP-grasp"/>
</dbReference>
<dbReference type="InterPro" id="IPR013815">
    <property type="entry name" value="ATP_grasp_subdomain_1"/>
</dbReference>
<dbReference type="InterPro" id="IPR000291">
    <property type="entry name" value="D-Ala_lig_Van_CS"/>
</dbReference>
<dbReference type="InterPro" id="IPR005905">
    <property type="entry name" value="D_ala_D_ala"/>
</dbReference>
<dbReference type="InterPro" id="IPR011095">
    <property type="entry name" value="Dala_Dala_lig_C"/>
</dbReference>
<dbReference type="InterPro" id="IPR011127">
    <property type="entry name" value="Dala_Dala_lig_N"/>
</dbReference>
<dbReference type="InterPro" id="IPR016185">
    <property type="entry name" value="PreATP-grasp_dom_sf"/>
</dbReference>
<dbReference type="NCBIfam" id="TIGR01205">
    <property type="entry name" value="D_ala_D_alaTIGR"/>
    <property type="match status" value="1"/>
</dbReference>
<dbReference type="NCBIfam" id="NF002378">
    <property type="entry name" value="PRK01372.1"/>
    <property type="match status" value="1"/>
</dbReference>
<dbReference type="PANTHER" id="PTHR23132">
    <property type="entry name" value="D-ALANINE--D-ALANINE LIGASE"/>
    <property type="match status" value="1"/>
</dbReference>
<dbReference type="PANTHER" id="PTHR23132:SF23">
    <property type="entry name" value="D-ALANINE--D-ALANINE LIGASE B"/>
    <property type="match status" value="1"/>
</dbReference>
<dbReference type="Pfam" id="PF07478">
    <property type="entry name" value="Dala_Dala_lig_C"/>
    <property type="match status" value="1"/>
</dbReference>
<dbReference type="Pfam" id="PF01820">
    <property type="entry name" value="Dala_Dala_lig_N"/>
    <property type="match status" value="1"/>
</dbReference>
<dbReference type="PIRSF" id="PIRSF039102">
    <property type="entry name" value="Ddl/VanB"/>
    <property type="match status" value="1"/>
</dbReference>
<dbReference type="SUPFAM" id="SSF56059">
    <property type="entry name" value="Glutathione synthetase ATP-binding domain-like"/>
    <property type="match status" value="1"/>
</dbReference>
<dbReference type="SUPFAM" id="SSF52440">
    <property type="entry name" value="PreATP-grasp domain"/>
    <property type="match status" value="1"/>
</dbReference>
<dbReference type="PROSITE" id="PS50975">
    <property type="entry name" value="ATP_GRASP"/>
    <property type="match status" value="1"/>
</dbReference>
<dbReference type="PROSITE" id="PS00843">
    <property type="entry name" value="DALA_DALA_LIGASE_1"/>
    <property type="match status" value="1"/>
</dbReference>
<dbReference type="PROSITE" id="PS00844">
    <property type="entry name" value="DALA_DALA_LIGASE_2"/>
    <property type="match status" value="1"/>
</dbReference>
<keyword id="KW-0067">ATP-binding</keyword>
<keyword id="KW-0133">Cell shape</keyword>
<keyword id="KW-0961">Cell wall biogenesis/degradation</keyword>
<keyword id="KW-0963">Cytoplasm</keyword>
<keyword id="KW-0436">Ligase</keyword>
<keyword id="KW-0460">Magnesium</keyword>
<keyword id="KW-0464">Manganese</keyword>
<keyword id="KW-0479">Metal-binding</keyword>
<keyword id="KW-0547">Nucleotide-binding</keyword>
<keyword id="KW-0573">Peptidoglycan synthesis</keyword>
<keyword id="KW-1185">Reference proteome</keyword>
<name>DDL_SACD2</name>
<feature type="chain" id="PRO_1000030489" description="D-alanine--D-alanine ligase">
    <location>
        <begin position="1"/>
        <end position="314"/>
    </location>
</feature>
<feature type="domain" description="ATP-grasp" evidence="2">
    <location>
        <begin position="115"/>
        <end position="310"/>
    </location>
</feature>
<feature type="binding site" evidence="2">
    <location>
        <begin position="141"/>
        <end position="196"/>
    </location>
    <ligand>
        <name>ATP</name>
        <dbReference type="ChEBI" id="CHEBI:30616"/>
    </ligand>
</feature>
<feature type="binding site" evidence="2">
    <location>
        <position position="264"/>
    </location>
    <ligand>
        <name>Mg(2+)</name>
        <dbReference type="ChEBI" id="CHEBI:18420"/>
        <label>1</label>
    </ligand>
</feature>
<feature type="binding site" evidence="2">
    <location>
        <position position="277"/>
    </location>
    <ligand>
        <name>Mg(2+)</name>
        <dbReference type="ChEBI" id="CHEBI:18420"/>
        <label>1</label>
    </ligand>
</feature>
<feature type="binding site" evidence="2">
    <location>
        <position position="277"/>
    </location>
    <ligand>
        <name>Mg(2+)</name>
        <dbReference type="ChEBI" id="CHEBI:18420"/>
        <label>2</label>
    </ligand>
</feature>
<feature type="binding site" evidence="2">
    <location>
        <position position="279"/>
    </location>
    <ligand>
        <name>Mg(2+)</name>
        <dbReference type="ChEBI" id="CHEBI:18420"/>
        <label>2</label>
    </ligand>
</feature>
<gene>
    <name evidence="2" type="primary">ddl</name>
    <name type="ordered locus">Sde_0850</name>
</gene>
<evidence type="ECO:0000250" key="1"/>
<evidence type="ECO:0000255" key="2">
    <source>
        <dbReference type="HAMAP-Rule" id="MF_00047"/>
    </source>
</evidence>
<comment type="function">
    <text evidence="2">Cell wall formation.</text>
</comment>
<comment type="catalytic activity">
    <reaction evidence="2">
        <text>2 D-alanine + ATP = D-alanyl-D-alanine + ADP + phosphate + H(+)</text>
        <dbReference type="Rhea" id="RHEA:11224"/>
        <dbReference type="ChEBI" id="CHEBI:15378"/>
        <dbReference type="ChEBI" id="CHEBI:30616"/>
        <dbReference type="ChEBI" id="CHEBI:43474"/>
        <dbReference type="ChEBI" id="CHEBI:57416"/>
        <dbReference type="ChEBI" id="CHEBI:57822"/>
        <dbReference type="ChEBI" id="CHEBI:456216"/>
        <dbReference type="EC" id="6.3.2.4"/>
    </reaction>
</comment>
<comment type="cofactor">
    <cofactor evidence="1">
        <name>Mg(2+)</name>
        <dbReference type="ChEBI" id="CHEBI:18420"/>
    </cofactor>
    <cofactor evidence="1">
        <name>Mn(2+)</name>
        <dbReference type="ChEBI" id="CHEBI:29035"/>
    </cofactor>
    <text evidence="1">Binds 2 magnesium or manganese ions per subunit.</text>
</comment>
<comment type="pathway">
    <text evidence="2">Cell wall biogenesis; peptidoglycan biosynthesis.</text>
</comment>
<comment type="subcellular location">
    <subcellularLocation>
        <location evidence="2">Cytoplasm</location>
    </subcellularLocation>
</comment>
<comment type="similarity">
    <text evidence="2">Belongs to the D-alanine--D-alanine ligase family.</text>
</comment>
<protein>
    <recommendedName>
        <fullName evidence="2">D-alanine--D-alanine ligase</fullName>
        <ecNumber evidence="2">6.3.2.4</ecNumber>
    </recommendedName>
    <alternativeName>
        <fullName evidence="2">D-Ala-D-Ala ligase</fullName>
    </alternativeName>
    <alternativeName>
        <fullName evidence="2">D-alanylalanine synthetase</fullName>
    </alternativeName>
</protein>
<organism>
    <name type="scientific">Saccharophagus degradans (strain 2-40 / ATCC 43961 / DSM 17024)</name>
    <dbReference type="NCBI Taxonomy" id="203122"/>
    <lineage>
        <taxon>Bacteria</taxon>
        <taxon>Pseudomonadati</taxon>
        <taxon>Pseudomonadota</taxon>
        <taxon>Gammaproteobacteria</taxon>
        <taxon>Cellvibrionales</taxon>
        <taxon>Cellvibrionaceae</taxon>
        <taxon>Saccharophagus</taxon>
    </lineage>
</organism>
<reference key="1">
    <citation type="journal article" date="2008" name="PLoS Genet.">
        <title>Complete genome sequence of the complex carbohydrate-degrading marine bacterium, Saccharophagus degradans strain 2-40 T.</title>
        <authorList>
            <person name="Weiner R.M."/>
            <person name="Taylor L.E. II"/>
            <person name="Henrissat B."/>
            <person name="Hauser L."/>
            <person name="Land M."/>
            <person name="Coutinho P.M."/>
            <person name="Rancurel C."/>
            <person name="Saunders E.H."/>
            <person name="Longmire A.G."/>
            <person name="Zhang H."/>
            <person name="Bayer E.A."/>
            <person name="Gilbert H.J."/>
            <person name="Larimer F."/>
            <person name="Zhulin I.B."/>
            <person name="Ekborg N.A."/>
            <person name="Lamed R."/>
            <person name="Richardson P.M."/>
            <person name="Borovok I."/>
            <person name="Hutcheson S."/>
        </authorList>
    </citation>
    <scope>NUCLEOTIDE SEQUENCE [LARGE SCALE GENOMIC DNA]</scope>
    <source>
        <strain>2-40 / ATCC 43961 / DSM 17024</strain>
    </source>
</reference>
<sequence>MTTTYVKKFDGNTAALGRTLVLFGGTSSEREVSLRSGAAVLQALQAGGVDAHGLDVQADAIAKIEAFAPDRVFIALHGPGGEDGKMQAVLDWLAIPYTGSDHAASALAMDKLKTKQVWQSVGLVTPEYASLVENSDWQAVLDSLGGQGFVKPAHEGSSIGMSVVSTAQELKAAYEKAAHYDAKVLVERRIVGREFTVAVLNGVALPAIGLKTDHVFYDYDAKYVSNTTQYLCPCGLTQEKEAELQSIAQQAFAAVGCKGWGRVDFMQDEAGNFYLLEVNTVPGMTDHSLVPMAARQSGIEFNELVLEILAQTLV</sequence>
<proteinExistence type="inferred from homology"/>